<proteinExistence type="evidence at protein level"/>
<name>GPN1_YEAST</name>
<comment type="function">
    <text evidence="5 7 8 9 17">Small GTPase required for proper nuclear import of RNA polymerase II (RNAPII) (PubMed:20855544, PubMed:21844196). May act at an RNAP assembly step prior to nuclear import (PubMed:23267056). Promotes sister chromatid separation during anaphase (PubMed:21532343).</text>
</comment>
<comment type="subunit">
    <text evidence="5 7 9 10 11">Heterodimers with GPN2 or GPN3 (PubMed:23267056, PubMed:23324351). Binds to RNA polymerase II (RNAPII) in a GTP-dependent manner (PubMed:20855544, PubMed:21844196). Interacts with nuclear pore protein NUP133 and nuclear export factor CRM1 (PubMed:21844196). Interacts with PCL1 (PubMed:15082539).</text>
</comment>
<comment type="interaction">
    <interactant intactId="EBI-25534">
        <id>P47122</id>
    </interactant>
    <interactant intactId="EBI-37977">
        <id>Q08726</id>
        <label>GPN2</label>
    </interactant>
    <organismsDiffer>false</organismsDiffer>
    <experiments>3</experiments>
</comment>
<comment type="interaction">
    <interactant intactId="EBI-25534">
        <id>P47122</id>
    </interactant>
    <interactant intactId="EBI-15767">
        <id>P08518</id>
        <label>RPB2</label>
    </interactant>
    <organismsDiffer>false</organismsDiffer>
    <experiments>3</experiments>
</comment>
<comment type="subcellular location">
    <subcellularLocation>
        <location evidence="3 6">Cytoplasm</location>
    </subcellularLocation>
</comment>
<comment type="PTM">
    <text evidence="5">Phosphorylated by the cyclin-CDK PCL1-PHO85.</text>
</comment>
<comment type="miscellaneous">
    <text evidence="4">Present with 15200 molecules/cell in log phase SD medium.</text>
</comment>
<comment type="similarity">
    <text evidence="15">Belongs to the GPN-loop GTPase family.</text>
</comment>
<evidence type="ECO:0000250" key="1">
    <source>
        <dbReference type="UniProtKB" id="Q9UYR9"/>
    </source>
</evidence>
<evidence type="ECO:0000256" key="2">
    <source>
        <dbReference type="SAM" id="MobiDB-lite"/>
    </source>
</evidence>
<evidence type="ECO:0000269" key="3">
    <source>
    </source>
</evidence>
<evidence type="ECO:0000269" key="4">
    <source>
    </source>
</evidence>
<evidence type="ECO:0000269" key="5">
    <source>
    </source>
</evidence>
<evidence type="ECO:0000269" key="6">
    <source>
    </source>
</evidence>
<evidence type="ECO:0000269" key="7">
    <source>
    </source>
</evidence>
<evidence type="ECO:0000269" key="8">
    <source>
    </source>
</evidence>
<evidence type="ECO:0000269" key="9">
    <source>
    </source>
</evidence>
<evidence type="ECO:0000269" key="10">
    <source>
    </source>
</evidence>
<evidence type="ECO:0000269" key="11">
    <source>
    </source>
</evidence>
<evidence type="ECO:0000303" key="12">
    <source>
    </source>
</evidence>
<evidence type="ECO:0000303" key="13">
    <source>
    </source>
</evidence>
<evidence type="ECO:0000303" key="14">
    <source>
    </source>
</evidence>
<evidence type="ECO:0000305" key="15"/>
<evidence type="ECO:0000305" key="16">
    <source>
    </source>
</evidence>
<evidence type="ECO:0000305" key="17">
    <source>
    </source>
</evidence>
<evidence type="ECO:0000312" key="18">
    <source>
        <dbReference type="SGD" id="S000003833"/>
    </source>
</evidence>
<evidence type="ECO:0007744" key="19">
    <source>
    </source>
</evidence>
<evidence type="ECO:0007744" key="20">
    <source>
    </source>
</evidence>
<evidence type="ECO:0007744" key="21">
    <source>
    </source>
</evidence>
<evidence type="ECO:0007829" key="22">
    <source>
        <dbReference type="PDB" id="5HCI"/>
    </source>
</evidence>
<evidence type="ECO:0007829" key="23">
    <source>
        <dbReference type="PDB" id="5HCN"/>
    </source>
</evidence>
<reference key="1">
    <citation type="journal article" date="1996" name="Yeast">
        <title>Analysis of a 62 kb DNA sequence of chromosome X reveals 36 open reading frames and a gene cluster with a counterpart on chromosome XI.</title>
        <authorList>
            <person name="Huang M.-E."/>
            <person name="Manus V."/>
            <person name="Chuat J.-C."/>
            <person name="Galibert F."/>
        </authorList>
    </citation>
    <scope>NUCLEOTIDE SEQUENCE [GENOMIC DNA]</scope>
    <source>
        <strain>ATCC 204508 / S288c</strain>
    </source>
</reference>
<reference key="2">
    <citation type="journal article" date="1996" name="EMBO J.">
        <title>Complete nucleotide sequence of Saccharomyces cerevisiae chromosome X.</title>
        <authorList>
            <person name="Galibert F."/>
            <person name="Alexandraki D."/>
            <person name="Baur A."/>
            <person name="Boles E."/>
            <person name="Chalwatzis N."/>
            <person name="Chuat J.-C."/>
            <person name="Coster F."/>
            <person name="Cziepluch C."/>
            <person name="de Haan M."/>
            <person name="Domdey H."/>
            <person name="Durand P."/>
            <person name="Entian K.-D."/>
            <person name="Gatius M."/>
            <person name="Goffeau A."/>
            <person name="Grivell L.A."/>
            <person name="Hennemann A."/>
            <person name="Herbert C.J."/>
            <person name="Heumann K."/>
            <person name="Hilger F."/>
            <person name="Hollenberg C.P."/>
            <person name="Huang M.-E."/>
            <person name="Jacq C."/>
            <person name="Jauniaux J.-C."/>
            <person name="Katsoulou C."/>
            <person name="Kirchrath L."/>
            <person name="Kleine K."/>
            <person name="Kordes E."/>
            <person name="Koetter P."/>
            <person name="Liebl S."/>
            <person name="Louis E.J."/>
            <person name="Manus V."/>
            <person name="Mewes H.-W."/>
            <person name="Miosga T."/>
            <person name="Obermaier B."/>
            <person name="Perea J."/>
            <person name="Pohl T.M."/>
            <person name="Portetelle D."/>
            <person name="Pujol A."/>
            <person name="Purnelle B."/>
            <person name="Ramezani Rad M."/>
            <person name="Rasmussen S.W."/>
            <person name="Rose M."/>
            <person name="Rossau R."/>
            <person name="Schaaff-Gerstenschlaeger I."/>
            <person name="Smits P.H.M."/>
            <person name="Scarcez T."/>
            <person name="Soriano N."/>
            <person name="To Van D."/>
            <person name="Tzermia M."/>
            <person name="Van Broekhoven A."/>
            <person name="Vandenbol M."/>
            <person name="Wedler H."/>
            <person name="von Wettstein D."/>
            <person name="Wambutt R."/>
            <person name="Zagulski M."/>
            <person name="Zollner A."/>
            <person name="Karpfinger-Hartl L."/>
        </authorList>
    </citation>
    <scope>NUCLEOTIDE SEQUENCE [LARGE SCALE GENOMIC DNA]</scope>
    <source>
        <strain>ATCC 204508 / S288c</strain>
    </source>
</reference>
<reference key="3">
    <citation type="journal article" date="2014" name="G3 (Bethesda)">
        <title>The reference genome sequence of Saccharomyces cerevisiae: Then and now.</title>
        <authorList>
            <person name="Engel S.R."/>
            <person name="Dietrich F.S."/>
            <person name="Fisk D.G."/>
            <person name="Binkley G."/>
            <person name="Balakrishnan R."/>
            <person name="Costanzo M.C."/>
            <person name="Dwight S.S."/>
            <person name="Hitz B.C."/>
            <person name="Karra K."/>
            <person name="Nash R.S."/>
            <person name="Weng S."/>
            <person name="Wong E.D."/>
            <person name="Lloyd P."/>
            <person name="Skrzypek M.S."/>
            <person name="Miyasato S.R."/>
            <person name="Simison M."/>
            <person name="Cherry J.M."/>
        </authorList>
    </citation>
    <scope>GENOME REANNOTATION</scope>
    <source>
        <strain>ATCC 204508 / S288c</strain>
    </source>
</reference>
<reference key="4">
    <citation type="journal article" date="2003" name="Nature">
        <title>Global analysis of protein localization in budding yeast.</title>
        <authorList>
            <person name="Huh W.-K."/>
            <person name="Falvo J.V."/>
            <person name="Gerke L.C."/>
            <person name="Carroll A.S."/>
            <person name="Howson R.W."/>
            <person name="Weissman J.S."/>
            <person name="O'Shea E.K."/>
        </authorList>
    </citation>
    <scope>SUBCELLULAR LOCATION [LARGE SCALE ANALYSIS]</scope>
</reference>
<reference key="5">
    <citation type="journal article" date="2003" name="Nature">
        <title>Global analysis of protein expression in yeast.</title>
        <authorList>
            <person name="Ghaemmaghami S."/>
            <person name="Huh W.-K."/>
            <person name="Bower K."/>
            <person name="Howson R.W."/>
            <person name="Belle A."/>
            <person name="Dephoure N."/>
            <person name="O'Shea E.K."/>
            <person name="Weissman J.S."/>
        </authorList>
    </citation>
    <scope>LEVEL OF PROTEIN EXPRESSION [LARGE SCALE ANALYSIS]</scope>
</reference>
<reference key="6">
    <citation type="journal article" date="2004" name="Genetics">
        <title>The identification of Pcl1-interacting proteins that genetically interact with Cla4 may indicate a link between G1 progression and mitotic exit.</title>
        <authorList>
            <person name="Keniry M.E."/>
            <person name="Kemp H.A."/>
            <person name="Rivers D.M."/>
            <person name="Sprague G.F. Jr."/>
        </authorList>
    </citation>
    <scope>FUNCTION</scope>
    <scope>PHOSPHORYLATION</scope>
    <scope>INTERACTION WITH PCL1</scope>
</reference>
<reference key="7">
    <citation type="journal article" date="2004" name="Mol. Cell. Biol.">
        <title>Npa1p, a component of very early pre-60S ribosomal particles, associates with a subset of small nucleolar RNPs required for peptidyl transferase center modification.</title>
        <authorList>
            <person name="Dez C."/>
            <person name="Froment C."/>
            <person name="Noaillac-Depeyre J."/>
            <person name="Monsarrat B."/>
            <person name="Caizergues-Ferrer M."/>
            <person name="Henry Y."/>
        </authorList>
    </citation>
    <scope>IDENTIFICATION BY MASS SPECTROMETRY</scope>
    <scope>SUBCELLULAR LOCATION</scope>
</reference>
<reference key="8">
    <citation type="journal article" date="2008" name="Mol. Cell. Proteomics">
        <title>A multidimensional chromatography technology for in-depth phosphoproteome analysis.</title>
        <authorList>
            <person name="Albuquerque C.P."/>
            <person name="Smolka M.B."/>
            <person name="Payne S.H."/>
            <person name="Bafna V."/>
            <person name="Eng J."/>
            <person name="Zhou H."/>
        </authorList>
    </citation>
    <scope>PHOSPHORYLATION [LARGE SCALE ANALYSIS] AT SER-313 AND SER-352</scope>
    <scope>IDENTIFICATION BY MASS SPECTROMETRY [LARGE SCALE ANALYSIS]</scope>
</reference>
<reference key="9">
    <citation type="journal article" date="2009" name="Science">
        <title>Global analysis of Cdk1 substrate phosphorylation sites provides insights into evolution.</title>
        <authorList>
            <person name="Holt L.J."/>
            <person name="Tuch B.B."/>
            <person name="Villen J."/>
            <person name="Johnson A.D."/>
            <person name="Gygi S.P."/>
            <person name="Morgan D.O."/>
        </authorList>
    </citation>
    <scope>PHOSPHORYLATION [LARGE SCALE ANALYSIS] AT SER-304; SER-308; SER-313 AND SER-352</scope>
    <scope>IDENTIFICATION BY MASS SPECTROMETRY [LARGE SCALE ANALYSIS]</scope>
</reference>
<reference key="10">
    <citation type="journal article" date="2010" name="Mol. Cell. Proteomics">
        <title>The protein interaction network of the human transcription machinery reveals a role for the conserved GTPase RPAP4/GPN1 and microtubule assembly in nuclear import and biogenesis of RNA polymerase II.</title>
        <authorList>
            <person name="Forget D."/>
            <person name="Lacombe A.A."/>
            <person name="Cloutier P."/>
            <person name="Al-Khoury R."/>
            <person name="Bouchard A."/>
            <person name="Lavallee-Adam M."/>
            <person name="Faubert D."/>
            <person name="Jeronimo C."/>
            <person name="Blanchette M."/>
            <person name="Coulombe B."/>
        </authorList>
    </citation>
    <scope>FUNCTION</scope>
    <scope>BINDING TO RNA POLYMERASE II</scope>
</reference>
<reference key="11">
    <citation type="journal article" date="2011" name="Cell Cycle">
        <title>A role for GPN-loop GTPase yGPN1 in sister chromatid cohesion.</title>
        <authorList>
            <person name="Alonso B."/>
            <person name="Chaussinand G."/>
            <person name="Armengaud J."/>
            <person name="Godon C."/>
        </authorList>
    </citation>
    <scope>FUNCTION</scope>
</reference>
<reference key="12">
    <citation type="journal article" date="2011" name="J. Biol. Chem.">
        <title>GTP-dependent binding and nuclear transport of RNA polymerase II by Npa3 protein.</title>
        <authorList>
            <person name="Staresincic L."/>
            <person name="Walker J."/>
            <person name="Dirac-Svejstrup A.B."/>
            <person name="Mitter R."/>
            <person name="Svejstrup J.Q."/>
        </authorList>
    </citation>
    <scope>FUNCTION</scope>
    <scope>BINDING TO RNA POLYMERASE II</scope>
    <scope>INTERACTION WITH NUP133 AND CRM1</scope>
    <scope>MUTAGENESIS OF ASP-106 AND GLN-110</scope>
</reference>
<reference key="13">
    <citation type="journal article" date="2012" name="Proteomics">
        <title>Sites of ubiquitin attachment in Saccharomyces cerevisiae.</title>
        <authorList>
            <person name="Starita L.M."/>
            <person name="Lo R.S."/>
            <person name="Eng J.K."/>
            <person name="von Haller P.D."/>
            <person name="Fields S."/>
        </authorList>
    </citation>
    <scope>UBIQUITINATION [LARGE SCALE ANALYSIS] AT LYS-369</scope>
    <scope>IDENTIFICATION BY MASS SPECTROMETRY [LARGE SCALE ANALYSIS]</scope>
</reference>
<reference key="14">
    <citation type="journal article" date="2013" name="Cell Cycle">
        <title>Eukaryotic GPN-loop GTPases paralogs use a dimeric assembly reminiscent of archeal GPN.</title>
        <authorList>
            <person name="Alonso B."/>
            <person name="Beraud C."/>
            <person name="Meguellati S."/>
            <person name="Chen S.W."/>
            <person name="Pellequer J.L."/>
            <person name="Armengaud J."/>
            <person name="Godon C."/>
        </authorList>
    </citation>
    <scope>INTERACTION WITH GPN2 AND GPN3</scope>
    <scope>MUTAGENESIS OF GLU-112</scope>
</reference>
<reference key="15">
    <citation type="journal article" date="2013" name="Genetics">
        <title>Biogenesis of RNA polymerases II and III requires the conserved GPN small GTPases in Saccharomyces cerevisiae.</title>
        <authorList>
            <person name="Minaker S.W."/>
            <person name="Filiatrault M.C."/>
            <person name="Ben-Aroya S."/>
            <person name="Hieter P."/>
            <person name="Stirling P.C."/>
        </authorList>
    </citation>
    <scope>INTERACTION WITH GPN2</scope>
</reference>
<keyword id="KW-0002">3D-structure</keyword>
<keyword id="KW-0963">Cytoplasm</keyword>
<keyword id="KW-0342">GTP-binding</keyword>
<keyword id="KW-0378">Hydrolase</keyword>
<keyword id="KW-1017">Isopeptide bond</keyword>
<keyword id="KW-0547">Nucleotide-binding</keyword>
<keyword id="KW-0597">Phosphoprotein</keyword>
<keyword id="KW-1185">Reference proteome</keyword>
<keyword id="KW-0832">Ubl conjugation</keyword>
<dbReference type="EC" id="3.6.5.-" evidence="16"/>
<dbReference type="EMBL" id="Z49572">
    <property type="protein sequence ID" value="CAA89600.1"/>
    <property type="molecule type" value="Genomic_DNA"/>
</dbReference>
<dbReference type="EMBL" id="L47993">
    <property type="protein sequence ID" value="AAB39297.1"/>
    <property type="molecule type" value="Genomic_DNA"/>
</dbReference>
<dbReference type="EMBL" id="BK006943">
    <property type="protein sequence ID" value="DAA08858.1"/>
    <property type="molecule type" value="Genomic_DNA"/>
</dbReference>
<dbReference type="PIR" id="S57091">
    <property type="entry name" value="S57091"/>
</dbReference>
<dbReference type="RefSeq" id="NP_012606.3">
    <property type="nucleotide sequence ID" value="NM_001181730.3"/>
</dbReference>
<dbReference type="PDB" id="5HCI">
    <property type="method" value="X-ray"/>
    <property type="resolution" value="2.30 A"/>
    <property type="chains" value="A/B/C/D/E/F=2-264"/>
</dbReference>
<dbReference type="PDB" id="5HCN">
    <property type="method" value="X-ray"/>
    <property type="resolution" value="2.20 A"/>
    <property type="chains" value="A=2-264"/>
</dbReference>
<dbReference type="PDBsum" id="5HCI"/>
<dbReference type="PDBsum" id="5HCN"/>
<dbReference type="SMR" id="P47122"/>
<dbReference type="BioGRID" id="33828">
    <property type="interactions" value="133"/>
</dbReference>
<dbReference type="DIP" id="DIP-1676N"/>
<dbReference type="FunCoup" id="P47122">
    <property type="interactions" value="1022"/>
</dbReference>
<dbReference type="IntAct" id="P47122">
    <property type="interactions" value="83"/>
</dbReference>
<dbReference type="MINT" id="P47122"/>
<dbReference type="STRING" id="4932.YJR072C"/>
<dbReference type="iPTMnet" id="P47122"/>
<dbReference type="PaxDb" id="4932-YJR072C"/>
<dbReference type="PeptideAtlas" id="P47122"/>
<dbReference type="EnsemblFungi" id="YJR072C_mRNA">
    <property type="protein sequence ID" value="YJR072C"/>
    <property type="gene ID" value="YJR072C"/>
</dbReference>
<dbReference type="GeneID" id="853535"/>
<dbReference type="KEGG" id="sce:YJR072C"/>
<dbReference type="AGR" id="SGD:S000003833"/>
<dbReference type="SGD" id="S000003833">
    <property type="gene designation" value="NPA3"/>
</dbReference>
<dbReference type="VEuPathDB" id="FungiDB:YJR072C"/>
<dbReference type="eggNOG" id="KOG1532">
    <property type="taxonomic scope" value="Eukaryota"/>
</dbReference>
<dbReference type="GeneTree" id="ENSGT00950000183172"/>
<dbReference type="HOGENOM" id="CLU_037460_1_2_1"/>
<dbReference type="InParanoid" id="P47122"/>
<dbReference type="OMA" id="MIIVFNK"/>
<dbReference type="OrthoDB" id="243313at2759"/>
<dbReference type="BioCyc" id="YEAST:G3O-31704-MONOMER"/>
<dbReference type="BioGRID-ORCS" id="853535">
    <property type="hits" value="8 hits in 10 CRISPR screens"/>
</dbReference>
<dbReference type="EvolutionaryTrace" id="P47122"/>
<dbReference type="PRO" id="PR:P47122"/>
<dbReference type="Proteomes" id="UP000002311">
    <property type="component" value="Chromosome X"/>
</dbReference>
<dbReference type="RNAct" id="P47122">
    <property type="molecule type" value="protein"/>
</dbReference>
<dbReference type="GO" id="GO:0005737">
    <property type="term" value="C:cytoplasm"/>
    <property type="evidence" value="ECO:0007005"/>
    <property type="project" value="SGD"/>
</dbReference>
<dbReference type="GO" id="GO:0005829">
    <property type="term" value="C:cytosol"/>
    <property type="evidence" value="ECO:0007005"/>
    <property type="project" value="SGD"/>
</dbReference>
<dbReference type="GO" id="GO:0016887">
    <property type="term" value="F:ATP hydrolysis activity"/>
    <property type="evidence" value="ECO:0000314"/>
    <property type="project" value="SGD"/>
</dbReference>
<dbReference type="GO" id="GO:0005525">
    <property type="term" value="F:GTP binding"/>
    <property type="evidence" value="ECO:0007669"/>
    <property type="project" value="UniProtKB-KW"/>
</dbReference>
<dbReference type="GO" id="GO:0003924">
    <property type="term" value="F:GTPase activity"/>
    <property type="evidence" value="ECO:0000314"/>
    <property type="project" value="SGD"/>
</dbReference>
<dbReference type="GO" id="GO:0007064">
    <property type="term" value="P:mitotic sister chromatid cohesion"/>
    <property type="evidence" value="ECO:0000315"/>
    <property type="project" value="SGD"/>
</dbReference>
<dbReference type="GO" id="GO:0006913">
    <property type="term" value="P:nucleocytoplasmic transport"/>
    <property type="evidence" value="ECO:0000314"/>
    <property type="project" value="SGD"/>
</dbReference>
<dbReference type="GO" id="GO:0006606">
    <property type="term" value="P:protein import into nucleus"/>
    <property type="evidence" value="ECO:0000315"/>
    <property type="project" value="SGD"/>
</dbReference>
<dbReference type="CDD" id="cd17870">
    <property type="entry name" value="GPN1"/>
    <property type="match status" value="1"/>
</dbReference>
<dbReference type="FunFam" id="3.40.50.300:FF:000579">
    <property type="entry name" value="GPN-loop GTPase"/>
    <property type="match status" value="1"/>
</dbReference>
<dbReference type="Gene3D" id="3.40.50.300">
    <property type="entry name" value="P-loop containing nucleotide triphosphate hydrolases"/>
    <property type="match status" value="1"/>
</dbReference>
<dbReference type="InterPro" id="IPR004130">
    <property type="entry name" value="Gpn"/>
</dbReference>
<dbReference type="InterPro" id="IPR030230">
    <property type="entry name" value="Gpn1/Npa3/XAB1"/>
</dbReference>
<dbReference type="InterPro" id="IPR027417">
    <property type="entry name" value="P-loop_NTPase"/>
</dbReference>
<dbReference type="PANTHER" id="PTHR21231:SF8">
    <property type="entry name" value="GPN-LOOP GTPASE 1"/>
    <property type="match status" value="1"/>
</dbReference>
<dbReference type="PANTHER" id="PTHR21231">
    <property type="entry name" value="XPA-BINDING PROTEIN 1-RELATED"/>
    <property type="match status" value="1"/>
</dbReference>
<dbReference type="Pfam" id="PF03029">
    <property type="entry name" value="ATP_bind_1"/>
    <property type="match status" value="1"/>
</dbReference>
<dbReference type="SUPFAM" id="SSF52540">
    <property type="entry name" value="P-loop containing nucleoside triphosphate hydrolases"/>
    <property type="match status" value="1"/>
</dbReference>
<organism>
    <name type="scientific">Saccharomyces cerevisiae (strain ATCC 204508 / S288c)</name>
    <name type="common">Baker's yeast</name>
    <dbReference type="NCBI Taxonomy" id="559292"/>
    <lineage>
        <taxon>Eukaryota</taxon>
        <taxon>Fungi</taxon>
        <taxon>Dikarya</taxon>
        <taxon>Ascomycota</taxon>
        <taxon>Saccharomycotina</taxon>
        <taxon>Saccharomycetes</taxon>
        <taxon>Saccharomycetales</taxon>
        <taxon>Saccharomycetaceae</taxon>
        <taxon>Saccharomyces</taxon>
    </lineage>
</organism>
<protein>
    <recommendedName>
        <fullName evidence="14">GPN-loop GTPase 1</fullName>
        <ecNumber evidence="16">3.6.5.-</ecNumber>
    </recommendedName>
    <alternativeName>
        <fullName evidence="12">Essential PCL1-interacting ATPase 1</fullName>
    </alternativeName>
    <alternativeName>
        <fullName evidence="15">GPN-loop GTPase NPA3</fullName>
    </alternativeName>
    <alternativeName>
        <fullName evidence="13">Nucleolar preribosomal-associated protein 3</fullName>
    </alternativeName>
</protein>
<accession>P47122</accession>
<accession>D6VWP2</accession>
<feature type="chain" id="PRO_0000203101" description="GPN-loop GTPase 1">
    <location>
        <begin position="1"/>
        <end position="385"/>
    </location>
</feature>
<feature type="region of interest" description="Disordered" evidence="2">
    <location>
        <begin position="317"/>
        <end position="356"/>
    </location>
</feature>
<feature type="short sequence motif" description="Gly-Pro-Asn (GPN)-loop; involved in dimer interface" evidence="1">
    <location>
        <begin position="70"/>
        <end position="72"/>
    </location>
</feature>
<feature type="compositionally biased region" description="Acidic residues" evidence="2">
    <location>
        <begin position="317"/>
        <end position="332"/>
    </location>
</feature>
<feature type="compositionally biased region" description="Basic and acidic residues" evidence="2">
    <location>
        <begin position="333"/>
        <end position="348"/>
    </location>
</feature>
<feature type="binding site" evidence="1">
    <location>
        <begin position="13"/>
        <end position="18"/>
    </location>
    <ligand>
        <name>GTP</name>
        <dbReference type="ChEBI" id="CHEBI:37565"/>
    </ligand>
</feature>
<feature type="binding site" evidence="1">
    <location>
        <begin position="173"/>
        <end position="176"/>
    </location>
    <ligand>
        <name>GTP</name>
        <dbReference type="ChEBI" id="CHEBI:37565"/>
    </ligand>
</feature>
<feature type="site" description="Stabilizes the phosphate intermediate; shared with dimeric partner" evidence="1">
    <location>
        <position position="72"/>
    </location>
</feature>
<feature type="modified residue" description="Phosphoserine" evidence="20">
    <location>
        <position position="304"/>
    </location>
</feature>
<feature type="modified residue" description="Phosphoserine" evidence="20">
    <location>
        <position position="308"/>
    </location>
</feature>
<feature type="modified residue" description="Phosphoserine" evidence="19 20">
    <location>
        <position position="313"/>
    </location>
</feature>
<feature type="modified residue" description="Phosphoserine" evidence="19 20">
    <location>
        <position position="352"/>
    </location>
</feature>
<feature type="cross-link" description="Glycyl lysine isopeptide (Lys-Gly) (interchain with G-Cter in ubiquitin)" evidence="21">
    <location>
        <position position="369"/>
    </location>
</feature>
<feature type="mutagenesis site" description="Impairs nuclear localization of RNAPII. Completely abolishes RNAPII binding." evidence="9">
    <original>D</original>
    <variation>A</variation>
    <location>
        <position position="106"/>
    </location>
</feature>
<feature type="mutagenesis site" description="Impairs nuclear localization of RNAPII, but does not impair RNAPII binding." evidence="9">
    <original>Q</original>
    <variation>L</variation>
    <location>
        <position position="110"/>
    </location>
</feature>
<feature type="mutagenesis site" description="Impairs heterodimer formation with GPN2 and GPN3." evidence="11">
    <original>E</original>
    <variation>K</variation>
    <location>
        <position position="112"/>
    </location>
</feature>
<feature type="strand" evidence="23">
    <location>
        <begin position="4"/>
        <end position="9"/>
    </location>
</feature>
<feature type="helix" evidence="23">
    <location>
        <begin position="16"/>
        <end position="29"/>
    </location>
</feature>
<feature type="strand" evidence="23">
    <location>
        <begin position="35"/>
        <end position="38"/>
    </location>
</feature>
<feature type="strand" evidence="23">
    <location>
        <begin position="51"/>
        <end position="54"/>
    </location>
</feature>
<feature type="turn" evidence="23">
    <location>
        <begin position="55"/>
        <end position="57"/>
    </location>
</feature>
<feature type="helix" evidence="22">
    <location>
        <begin position="60"/>
        <end position="67"/>
    </location>
</feature>
<feature type="helix" evidence="23">
    <location>
        <begin position="73"/>
        <end position="84"/>
    </location>
</feature>
<feature type="helix" evidence="23">
    <location>
        <begin position="86"/>
        <end position="95"/>
    </location>
</feature>
<feature type="turn" evidence="23">
    <location>
        <begin position="96"/>
        <end position="99"/>
    </location>
</feature>
<feature type="strand" evidence="23">
    <location>
        <begin position="101"/>
        <end position="106"/>
    </location>
</feature>
<feature type="helix" evidence="23">
    <location>
        <begin position="112"/>
        <end position="115"/>
    </location>
</feature>
<feature type="helix" evidence="23">
    <location>
        <begin position="118"/>
        <end position="128"/>
    </location>
</feature>
<feature type="strand" evidence="23">
    <location>
        <begin position="133"/>
        <end position="139"/>
    </location>
</feature>
<feature type="helix" evidence="23">
    <location>
        <begin position="141"/>
        <end position="143"/>
    </location>
</feature>
<feature type="helix" evidence="23">
    <location>
        <begin position="147"/>
        <end position="164"/>
    </location>
</feature>
<feature type="strand" evidence="23">
    <location>
        <begin position="168"/>
        <end position="172"/>
    </location>
</feature>
<feature type="helix" evidence="23">
    <location>
        <begin position="175"/>
        <end position="177"/>
    </location>
</feature>
<feature type="helix" evidence="23">
    <location>
        <begin position="182"/>
        <end position="197"/>
    </location>
</feature>
<feature type="helix" evidence="23">
    <location>
        <begin position="216"/>
        <end position="231"/>
    </location>
</feature>
<feature type="strand" evidence="23">
    <location>
        <begin position="232"/>
        <end position="236"/>
    </location>
</feature>
<feature type="turn" evidence="23">
    <location>
        <begin position="239"/>
        <end position="241"/>
    </location>
</feature>
<feature type="helix" evidence="23">
    <location>
        <begin position="245"/>
        <end position="262"/>
    </location>
</feature>
<gene>
    <name evidence="13" type="primary">NPA3</name>
    <name evidence="12" type="synonym">EPA1</name>
    <name evidence="14" type="synonym">GPN1</name>
    <name evidence="18" type="ordered locus">YJR072C</name>
    <name type="ORF">J1821</name>
</gene>
<sequence>MSLSTIICIGMAGSGKTTFMQRLNSHLRAEKTPPYVINLDPAVLRVPYGANIDIRDSIKYKKVMENYQLGPNGAIVTSLNLFSTKIDQVIRLVEQKKDKFQNCIIDTPGQIECFVWSASGAIITESFASSFPTVIAYIVDTPRNSSPTTFMSNMLYACSILYKTKLPMIVVFNKTDVCKADFAKEWMTDFESFQAAIKEDQDLNGDNGLGSGYMSSLVNSMSLMLEEFYSQLDVVGVSSFTGDGFDEFMQCVDKKVDEYDQYYKQEREKALNLKKKKEEMRKQKSLNGLMKDLGLNEKSSAAASDNDSIDAISDLEEDANDGLVDRDEDEGVEREYTFPGEERTKGEVNENSAPDLQRRYQEAMQQVGKTASSETAENIAKYIRN</sequence>